<accession>P06430</accession>
<organism>
    <name type="scientific">Human papillomavirus type 8</name>
    <dbReference type="NCBI Taxonomy" id="10579"/>
    <lineage>
        <taxon>Viruses</taxon>
        <taxon>Monodnaviria</taxon>
        <taxon>Shotokuvirae</taxon>
        <taxon>Cossaviricota</taxon>
        <taxon>Papovaviricetes</taxon>
        <taxon>Zurhausenvirales</taxon>
        <taxon>Papillomaviridae</taxon>
        <taxon>Firstpapillomavirinae</taxon>
        <taxon>Betapapillomavirus</taxon>
        <taxon>Betapapillomavirus 1</taxon>
    </lineage>
</organism>
<sequence>MIGKEVTVQDFVLKLSEIQPEVLPVDLLCEEELPNEQETEEELDIERTVFKIVAPCGCSCCQVKLRLFVNATDSGIRTFQELLFRDLQLLCPECRGNCKHGGS</sequence>
<organismHost>
    <name type="scientific">Homo sapiens</name>
    <name type="common">Human</name>
    <dbReference type="NCBI Taxonomy" id="9606"/>
</organismHost>
<dbReference type="EMBL" id="M12737">
    <property type="status" value="NOT_ANNOTATED_CDS"/>
    <property type="molecule type" value="Genomic_DNA"/>
</dbReference>
<dbReference type="PIR" id="A03691">
    <property type="entry name" value="W7WL8"/>
</dbReference>
<dbReference type="SMR" id="P06430"/>
<dbReference type="IntAct" id="P06430">
    <property type="interactions" value="60"/>
</dbReference>
<dbReference type="MINT" id="P06430"/>
<dbReference type="Proteomes" id="UP000009103">
    <property type="component" value="Segment"/>
</dbReference>
<dbReference type="GO" id="GO:0030430">
    <property type="term" value="C:host cell cytoplasm"/>
    <property type="evidence" value="ECO:0007669"/>
    <property type="project" value="UniProtKB-SubCell"/>
</dbReference>
<dbReference type="GO" id="GO:0042025">
    <property type="term" value="C:host cell nucleus"/>
    <property type="evidence" value="ECO:0007669"/>
    <property type="project" value="UniProtKB-SubCell"/>
</dbReference>
<dbReference type="GO" id="GO:0003677">
    <property type="term" value="F:DNA binding"/>
    <property type="evidence" value="ECO:0007669"/>
    <property type="project" value="UniProtKB-UniRule"/>
</dbReference>
<dbReference type="GO" id="GO:0003700">
    <property type="term" value="F:DNA-binding transcription factor activity"/>
    <property type="evidence" value="ECO:0007669"/>
    <property type="project" value="UniProtKB-UniRule"/>
</dbReference>
<dbReference type="GO" id="GO:0019904">
    <property type="term" value="F:protein domain specific binding"/>
    <property type="evidence" value="ECO:0007669"/>
    <property type="project" value="UniProtKB-UniRule"/>
</dbReference>
<dbReference type="GO" id="GO:0008270">
    <property type="term" value="F:zinc ion binding"/>
    <property type="evidence" value="ECO:0007669"/>
    <property type="project" value="UniProtKB-KW"/>
</dbReference>
<dbReference type="GO" id="GO:0006351">
    <property type="term" value="P:DNA-templated transcription"/>
    <property type="evidence" value="ECO:0007669"/>
    <property type="project" value="UniProtKB-UniRule"/>
</dbReference>
<dbReference type="GO" id="GO:0039645">
    <property type="term" value="P:symbiont-mediated perturbation of host cell cycle G1/S transition checkpoint"/>
    <property type="evidence" value="ECO:0007669"/>
    <property type="project" value="UniProtKB-UniRule"/>
</dbReference>
<dbReference type="GO" id="GO:0052170">
    <property type="term" value="P:symbiont-mediated suppression of host innate immune response"/>
    <property type="evidence" value="ECO:0007669"/>
    <property type="project" value="UniProtKB-KW"/>
</dbReference>
<dbReference type="GO" id="GO:0039502">
    <property type="term" value="P:symbiont-mediated suppression of host type I interferon-mediated signaling pathway"/>
    <property type="evidence" value="ECO:0007669"/>
    <property type="project" value="UniProtKB-UniRule"/>
</dbReference>
<dbReference type="Gene3D" id="3.30.160.330">
    <property type="match status" value="1"/>
</dbReference>
<dbReference type="HAMAP" id="MF_04004">
    <property type="entry name" value="PPV_E7"/>
    <property type="match status" value="1"/>
</dbReference>
<dbReference type="InterPro" id="IPR000148">
    <property type="entry name" value="Papilloma_E7"/>
</dbReference>
<dbReference type="Pfam" id="PF00527">
    <property type="entry name" value="E7"/>
    <property type="match status" value="1"/>
</dbReference>
<dbReference type="PIRSF" id="PIRSF003407">
    <property type="entry name" value="Papvi_E7"/>
    <property type="match status" value="1"/>
</dbReference>
<dbReference type="SUPFAM" id="SSF161234">
    <property type="entry name" value="E7 C-terminal domain-like"/>
    <property type="match status" value="1"/>
</dbReference>
<feature type="chain" id="PRO_0000133407" description="Protein E7">
    <location>
        <begin position="1"/>
        <end position="103"/>
    </location>
</feature>
<feature type="zinc finger region" evidence="1">
    <location>
        <begin position="56"/>
        <end position="94"/>
    </location>
</feature>
<feature type="region of interest" description="E7 terminal domain" evidence="1">
    <location>
        <begin position="1"/>
        <end position="45"/>
    </location>
</feature>
<feature type="short sequence motif" description="LXCXE motif; interaction with host RB1 and TMEM173/STING" evidence="1">
    <location>
        <begin position="27"/>
        <end position="31"/>
    </location>
</feature>
<feature type="short sequence motif" description="Nuclear export signal" evidence="1">
    <location>
        <begin position="76"/>
        <end position="84"/>
    </location>
</feature>
<proteinExistence type="inferred from homology"/>
<comment type="function">
    <text evidence="1">Plays a role in viral genome replication by driving entry of quiescent cells into the cell cycle. Stimulation of progression from G1 to S phase allows the virus to efficiently use the cellular DNA replicating machinery to achieve viral genome replication. E7 protein has both transforming and trans-activating activities. Induces the disassembly of the E2F1 transcription factor from RB1, with subsequent transcriptional activation of E2F1-regulated S-phase genes. Interferes with host histone deacetylation mediated by HDAC1 and HDAC2, leading to transcription activation. Also plays a role in the inhibition of both antiviral and antiproliferative functions of host interferon alpha. Interaction with host TMEM173/STING impairs the ability of TMEM173/STING to sense cytosolic DNA and promote the production of type I interferon (IFN-alpha and IFN-beta).</text>
</comment>
<comment type="subunit">
    <text evidence="1">Homodimer. Homooligomer. Interacts with host RB1; this interaction induces dissociation of RB1-E2F1 complex thereby disrupting RB1 activity. Interacts with host EP300; this interaction represses EP300 transcriptional activity. Interacts with protein E2; this interaction inhibits E7 oncogenic activity. Interacts with host TMEM173/STING; this interaction impairs the ability of TMEM173/STING to sense cytosolic DNA and promote the production of type I interferon (IFN-alpha and IFN-beta).</text>
</comment>
<comment type="subcellular location">
    <subcellularLocation>
        <location evidence="1">Host cytoplasm</location>
    </subcellularLocation>
    <subcellularLocation>
        <location evidence="1">Host nucleus</location>
    </subcellularLocation>
    <text evidence="1">Predominantly found in the host nucleus.</text>
</comment>
<comment type="domain">
    <text evidence="1">The E7 terminal domain is an intrinsically disordered domain, whose flexibility and conformational transitions confer target adaptability to the oncoprotein. It allows adaptation to a variety of protein targets and exposes the PEST degradation sequence that regulates its turnover in the cell.</text>
</comment>
<comment type="PTM">
    <text evidence="1">Highly phosphorylated.</text>
</comment>
<comment type="similarity">
    <text evidence="1">Belongs to the papillomaviridae E7 protein family.</text>
</comment>
<name>VE7_HPV08</name>
<gene>
    <name evidence="1" type="primary">E7</name>
</gene>
<evidence type="ECO:0000255" key="1">
    <source>
        <dbReference type="HAMAP-Rule" id="MF_04004"/>
    </source>
</evidence>
<reference key="1">
    <citation type="journal article" date="1986" name="J. Virol.">
        <title>Epidermodysplasia verruciformis-associated human papillomavirus 8: genomic sequence and comparative analysis.</title>
        <authorList>
            <person name="Fuchs P.G."/>
            <person name="Iftner T."/>
            <person name="Weninger J."/>
            <person name="Pfister H."/>
        </authorList>
    </citation>
    <scope>NUCLEOTIDE SEQUENCE [GENOMIC DNA]</scope>
</reference>
<reference key="2">
    <citation type="journal article" date="2002" name="Rev. Med. Virol.">
        <title>Interactions of SV40 large T antigen and other viral proteins with retinoblastoma tumour suppressor.</title>
        <authorList>
            <person name="Lee C."/>
            <person name="Cho Y."/>
        </authorList>
    </citation>
    <scope>REVIEW</scope>
</reference>
<protein>
    <recommendedName>
        <fullName evidence="1">Protein E7</fullName>
    </recommendedName>
</protein>
<keyword id="KW-0010">Activator</keyword>
<keyword id="KW-0238">DNA-binding</keyword>
<keyword id="KW-0244">Early protein</keyword>
<keyword id="KW-1078">G1/S host cell cycle checkpoint dysregulation by virus</keyword>
<keyword id="KW-1035">Host cytoplasm</keyword>
<keyword id="KW-1048">Host nucleus</keyword>
<keyword id="KW-0945">Host-virus interaction</keyword>
<keyword id="KW-1090">Inhibition of host innate immune response by virus</keyword>
<keyword id="KW-1114">Inhibition of host interferon signaling pathway by virus</keyword>
<keyword id="KW-0922">Interferon antiviral system evasion</keyword>
<keyword id="KW-0479">Metal-binding</keyword>
<keyword id="KW-1121">Modulation of host cell cycle by virus</keyword>
<keyword id="KW-0553">Oncogene</keyword>
<keyword id="KW-0804">Transcription</keyword>
<keyword id="KW-0805">Transcription regulation</keyword>
<keyword id="KW-0899">Viral immunoevasion</keyword>
<keyword id="KW-0862">Zinc</keyword>
<keyword id="KW-0863">Zinc-finger</keyword>